<keyword id="KW-0131">Cell cycle</keyword>
<keyword id="KW-0132">Cell division</keyword>
<keyword id="KW-0175">Coiled coil</keyword>
<keyword id="KW-0227">DNA damage</keyword>
<keyword id="KW-0234">DNA repair</keyword>
<keyword id="KW-0235">DNA replication</keyword>
<keyword id="KW-0539">Nucleus</keyword>
<keyword id="KW-1185">Reference proteome</keyword>
<keyword id="KW-0690">Ribosome biogenesis</keyword>
<proteinExistence type="evidence at transcript level"/>
<comment type="function">
    <text evidence="1">Component of the DNA replication complex, which interacts with two kinases, CDK2 and CDC7, thereby providing a functional and physical link between CDK2 and CDC7 during firing of the origins of replication. Regulates ATR-mediated checkpoint signaling in response to DNA damage. Part of the 55LCC heterohexameric ATPase complex which is chromatin-associated and promotes replisome proteostasis to maintain replication fork progression and genome stability. Required for replication fork progression, sister chromatid cohesion, and chromosome stability. The ATPase activity is specifically enhanced by replication fork DNA and is coupled to cysteine protease-dependent cleavage of replisome substrates in response to replication fork damage. Uses ATPase activity to process replisome substrates in S-phase, facilitating their proteolytic turnover from chromatin to ensure DNA replication and mitotic fidelity. As part of 55LCC complex, also involved in the cytoplasmic maturation steps of pre-60S ribosomal particles by promoting the release of shuttling protein RSL24D1/RLP24 from the pre-ribosomal particles.</text>
</comment>
<comment type="subunit">
    <text evidence="1">Homodimer. Part of the 55LCC heterohexameric ATPase complex.</text>
</comment>
<comment type="subcellular location">
    <subcellularLocation>
        <location evidence="1">Nucleus</location>
    </subcellularLocation>
</comment>
<comment type="similarity">
    <text evidence="3">Belongs to the CINP family.</text>
</comment>
<accession>Q6GM07</accession>
<organism>
    <name type="scientific">Xenopus laevis</name>
    <name type="common">African clawed frog</name>
    <dbReference type="NCBI Taxonomy" id="8355"/>
    <lineage>
        <taxon>Eukaryota</taxon>
        <taxon>Metazoa</taxon>
        <taxon>Chordata</taxon>
        <taxon>Craniata</taxon>
        <taxon>Vertebrata</taxon>
        <taxon>Euteleostomi</taxon>
        <taxon>Amphibia</taxon>
        <taxon>Batrachia</taxon>
        <taxon>Anura</taxon>
        <taxon>Pipoidea</taxon>
        <taxon>Pipidae</taxon>
        <taxon>Xenopodinae</taxon>
        <taxon>Xenopus</taxon>
        <taxon>Xenopus</taxon>
    </lineage>
</organism>
<protein>
    <recommendedName>
        <fullName>Cyclin-dependent kinase 2-interacting protein</fullName>
    </recommendedName>
</protein>
<sequence length="207" mass="23974">MESKSPGYITPKKPALSASARKIKDNAADWHNLMLKWETYNNDSFNIASKIVNLKITAESADRMLLDEPSPNKDNITTDKVELDRLCSELLQTIENMEKIWTKMEKITATFKGICDLEAYQFPGDTSKPTHFHTWPTTLFYETSMKMVDMYKKEIQLKRTIVGDLAHTSDQDLRMVYLSCWLYQPYIDNNIKVLLESMLLETGHRPI</sequence>
<evidence type="ECO:0000250" key="1">
    <source>
        <dbReference type="UniProtKB" id="Q9BW66"/>
    </source>
</evidence>
<evidence type="ECO:0000255" key="2"/>
<evidence type="ECO:0000305" key="3"/>
<dbReference type="EMBL" id="BC074285">
    <property type="protein sequence ID" value="AAH74285.1"/>
    <property type="molecule type" value="mRNA"/>
</dbReference>
<dbReference type="RefSeq" id="NP_001086170.1">
    <property type="nucleotide sequence ID" value="NM_001092701.1"/>
</dbReference>
<dbReference type="SMR" id="Q6GM07"/>
<dbReference type="DNASU" id="444599"/>
<dbReference type="GeneID" id="444599"/>
<dbReference type="KEGG" id="xla:444599"/>
<dbReference type="AGR" id="Xenbase:XB-GENE-954231"/>
<dbReference type="CTD" id="444599"/>
<dbReference type="Xenbase" id="XB-GENE-954231">
    <property type="gene designation" value="cinp.S"/>
</dbReference>
<dbReference type="OrthoDB" id="17066at2759"/>
<dbReference type="Proteomes" id="UP000186698">
    <property type="component" value="Chromosome 8S"/>
</dbReference>
<dbReference type="Bgee" id="444599">
    <property type="expression patterns" value="Expressed in gastrula and 19 other cell types or tissues"/>
</dbReference>
<dbReference type="GO" id="GO:0005634">
    <property type="term" value="C:nucleus"/>
    <property type="evidence" value="ECO:0007669"/>
    <property type="project" value="UniProtKB-SubCell"/>
</dbReference>
<dbReference type="GO" id="GO:1990275">
    <property type="term" value="F:preribosome binding"/>
    <property type="evidence" value="ECO:0000250"/>
    <property type="project" value="UniProtKB"/>
</dbReference>
<dbReference type="GO" id="GO:0051301">
    <property type="term" value="P:cell division"/>
    <property type="evidence" value="ECO:0007669"/>
    <property type="project" value="UniProtKB-KW"/>
</dbReference>
<dbReference type="GO" id="GO:0006281">
    <property type="term" value="P:DNA repair"/>
    <property type="evidence" value="ECO:0007669"/>
    <property type="project" value="UniProtKB-KW"/>
</dbReference>
<dbReference type="GO" id="GO:0006260">
    <property type="term" value="P:DNA replication"/>
    <property type="evidence" value="ECO:0007669"/>
    <property type="project" value="UniProtKB-KW"/>
</dbReference>
<dbReference type="GO" id="GO:0042273">
    <property type="term" value="P:ribosomal large subunit biogenesis"/>
    <property type="evidence" value="ECO:0000250"/>
    <property type="project" value="UniProtKB"/>
</dbReference>
<dbReference type="InterPro" id="IPR023250">
    <property type="entry name" value="Cyclin-dep_Kinase_2_interact"/>
</dbReference>
<dbReference type="PANTHER" id="PTHR15827">
    <property type="entry name" value="CYCLIN-DEPENDENT KINASE 2-INTERACTING PROTEIN"/>
    <property type="match status" value="1"/>
</dbReference>
<dbReference type="PANTHER" id="PTHR15827:SF2">
    <property type="entry name" value="CYCLIN-DEPENDENT KINASE 2-INTERACTING PROTEIN"/>
    <property type="match status" value="1"/>
</dbReference>
<dbReference type="PRINTS" id="PR02040">
    <property type="entry name" value="CDK2IP"/>
</dbReference>
<name>CINP_XENLA</name>
<feature type="chain" id="PRO_0000326057" description="Cyclin-dependent kinase 2-interacting protein">
    <location>
        <begin position="1"/>
        <end position="207"/>
    </location>
</feature>
<feature type="coiled-coil region" evidence="2">
    <location>
        <begin position="78"/>
        <end position="99"/>
    </location>
</feature>
<gene>
    <name type="primary">cinp</name>
</gene>
<reference key="1">
    <citation type="submission" date="2004-06" db="EMBL/GenBank/DDBJ databases">
        <authorList>
            <consortium name="NIH - Xenopus Gene Collection (XGC) project"/>
        </authorList>
    </citation>
    <scope>NUCLEOTIDE SEQUENCE [LARGE SCALE MRNA]</scope>
    <source>
        <tissue>Eye</tissue>
    </source>
</reference>